<organism>
    <name type="scientific">Streptococcus pneumoniae serotype 4 (strain ATCC BAA-334 / TIGR4)</name>
    <dbReference type="NCBI Taxonomy" id="170187"/>
    <lineage>
        <taxon>Bacteria</taxon>
        <taxon>Bacillati</taxon>
        <taxon>Bacillota</taxon>
        <taxon>Bacilli</taxon>
        <taxon>Lactobacillales</taxon>
        <taxon>Streptococcaceae</taxon>
        <taxon>Streptococcus</taxon>
    </lineage>
</organism>
<proteinExistence type="inferred from homology"/>
<evidence type="ECO:0000255" key="1">
    <source>
        <dbReference type="HAMAP-Rule" id="MF_00147"/>
    </source>
</evidence>
<gene>
    <name evidence="1" type="primary">tpiA</name>
    <name type="synonym">tpi</name>
    <name type="ordered locus">SP_1574</name>
</gene>
<name>TPIS_STRPN</name>
<reference key="1">
    <citation type="journal article" date="2001" name="Science">
        <title>Complete genome sequence of a virulent isolate of Streptococcus pneumoniae.</title>
        <authorList>
            <person name="Tettelin H."/>
            <person name="Nelson K.E."/>
            <person name="Paulsen I.T."/>
            <person name="Eisen J.A."/>
            <person name="Read T.D."/>
            <person name="Peterson S.N."/>
            <person name="Heidelberg J.F."/>
            <person name="DeBoy R.T."/>
            <person name="Haft D.H."/>
            <person name="Dodson R.J."/>
            <person name="Durkin A.S."/>
            <person name="Gwinn M.L."/>
            <person name="Kolonay J.F."/>
            <person name="Nelson W.C."/>
            <person name="Peterson J.D."/>
            <person name="Umayam L.A."/>
            <person name="White O."/>
            <person name="Salzberg S.L."/>
            <person name="Lewis M.R."/>
            <person name="Radune D."/>
            <person name="Holtzapple E.K."/>
            <person name="Khouri H.M."/>
            <person name="Wolf A.M."/>
            <person name="Utterback T.R."/>
            <person name="Hansen C.L."/>
            <person name="McDonald L.A."/>
            <person name="Feldblyum T.V."/>
            <person name="Angiuoli S.V."/>
            <person name="Dickinson T."/>
            <person name="Hickey E.K."/>
            <person name="Holt I.E."/>
            <person name="Loftus B.J."/>
            <person name="Yang F."/>
            <person name="Smith H.O."/>
            <person name="Venter J.C."/>
            <person name="Dougherty B.A."/>
            <person name="Morrison D.A."/>
            <person name="Hollingshead S.K."/>
            <person name="Fraser C.M."/>
        </authorList>
    </citation>
    <scope>NUCLEOTIDE SEQUENCE [LARGE SCALE GENOMIC DNA]</scope>
    <source>
        <strain>ATCC BAA-334 / TIGR4</strain>
    </source>
</reference>
<feature type="chain" id="PRO_0000090297" description="Triosephosphate isomerase">
    <location>
        <begin position="1"/>
        <end position="252"/>
    </location>
</feature>
<feature type="active site" description="Electrophile" evidence="1">
    <location>
        <position position="96"/>
    </location>
</feature>
<feature type="active site" description="Proton acceptor" evidence="1">
    <location>
        <position position="168"/>
    </location>
</feature>
<feature type="binding site" evidence="1">
    <location>
        <begin position="10"/>
        <end position="12"/>
    </location>
    <ligand>
        <name>substrate</name>
    </ligand>
</feature>
<feature type="binding site" evidence="1">
    <location>
        <position position="174"/>
    </location>
    <ligand>
        <name>substrate</name>
    </ligand>
</feature>
<feature type="binding site" evidence="1">
    <location>
        <position position="214"/>
    </location>
    <ligand>
        <name>substrate</name>
    </ligand>
</feature>
<feature type="binding site" evidence="1">
    <location>
        <begin position="235"/>
        <end position="236"/>
    </location>
    <ligand>
        <name>substrate</name>
    </ligand>
</feature>
<protein>
    <recommendedName>
        <fullName evidence="1">Triosephosphate isomerase</fullName>
        <shortName evidence="1">TIM</shortName>
        <shortName evidence="1">TPI</shortName>
        <ecNumber evidence="1">5.3.1.1</ecNumber>
    </recommendedName>
    <alternativeName>
        <fullName evidence="1">Triose-phosphate isomerase</fullName>
    </alternativeName>
</protein>
<accession>P66942</accession>
<accession>Q97PN1</accession>
<comment type="function">
    <text evidence="1">Involved in the gluconeogenesis. Catalyzes stereospecifically the conversion of dihydroxyacetone phosphate (DHAP) to D-glyceraldehyde-3-phosphate (G3P).</text>
</comment>
<comment type="catalytic activity">
    <reaction evidence="1">
        <text>D-glyceraldehyde 3-phosphate = dihydroxyacetone phosphate</text>
        <dbReference type="Rhea" id="RHEA:18585"/>
        <dbReference type="ChEBI" id="CHEBI:57642"/>
        <dbReference type="ChEBI" id="CHEBI:59776"/>
        <dbReference type="EC" id="5.3.1.1"/>
    </reaction>
</comment>
<comment type="pathway">
    <text evidence="1">Carbohydrate biosynthesis; gluconeogenesis.</text>
</comment>
<comment type="pathway">
    <text evidence="1">Carbohydrate degradation; glycolysis; D-glyceraldehyde 3-phosphate from glycerone phosphate: step 1/1.</text>
</comment>
<comment type="subunit">
    <text evidence="1">Homodimer.</text>
</comment>
<comment type="subcellular location">
    <subcellularLocation>
        <location evidence="1">Cytoplasm</location>
    </subcellularLocation>
</comment>
<comment type="similarity">
    <text evidence="1">Belongs to the triosephosphate isomerase family.</text>
</comment>
<sequence length="252" mass="26550">MSRKPFIAGNWKMNKNPEEAKAFVEAVASKLPSSDLVEAGIAAPALDLTTVLAVAKGSNLKVAAQNCYFENAGAFTGETSPQVLKEIGTDYVVIGHSERRDYFHETDEDINKKAKAIFANGMLPIICCGESLETYEAGKAAEFVGAQVSAALAGLTAEQVAASVIAYEPIWAIGTGKSASQDDAQKMCKVVRDVVAADFGQEVADKVRVQYGGSVKPENVASYMACPDVDGALVGGASLEAESFLALLDFVK</sequence>
<keyword id="KW-0963">Cytoplasm</keyword>
<keyword id="KW-0312">Gluconeogenesis</keyword>
<keyword id="KW-0324">Glycolysis</keyword>
<keyword id="KW-0413">Isomerase</keyword>
<keyword id="KW-1185">Reference proteome</keyword>
<dbReference type="EC" id="5.3.1.1" evidence="1"/>
<dbReference type="EMBL" id="AE005672">
    <property type="protein sequence ID" value="AAK75660.1"/>
    <property type="molecule type" value="Genomic_DNA"/>
</dbReference>
<dbReference type="PIR" id="C95183">
    <property type="entry name" value="C95183"/>
</dbReference>
<dbReference type="RefSeq" id="WP_000087897.1">
    <property type="nucleotide sequence ID" value="NZ_CP155539.1"/>
</dbReference>
<dbReference type="SMR" id="P66942"/>
<dbReference type="PaxDb" id="170187-SP_1574"/>
<dbReference type="EnsemblBacteria" id="AAK75660">
    <property type="protein sequence ID" value="AAK75660"/>
    <property type="gene ID" value="SP_1574"/>
</dbReference>
<dbReference type="GeneID" id="45653189"/>
<dbReference type="KEGG" id="spn:SP_1574"/>
<dbReference type="eggNOG" id="COG0149">
    <property type="taxonomic scope" value="Bacteria"/>
</dbReference>
<dbReference type="PhylomeDB" id="P66942"/>
<dbReference type="BioCyc" id="SPNE170187:G1FZB-1593-MONOMER"/>
<dbReference type="UniPathway" id="UPA00109">
    <property type="reaction ID" value="UER00189"/>
</dbReference>
<dbReference type="UniPathway" id="UPA00138"/>
<dbReference type="Proteomes" id="UP000000585">
    <property type="component" value="Chromosome"/>
</dbReference>
<dbReference type="GO" id="GO:0005829">
    <property type="term" value="C:cytosol"/>
    <property type="evidence" value="ECO:0007669"/>
    <property type="project" value="TreeGrafter"/>
</dbReference>
<dbReference type="GO" id="GO:0004807">
    <property type="term" value="F:triose-phosphate isomerase activity"/>
    <property type="evidence" value="ECO:0007669"/>
    <property type="project" value="UniProtKB-UniRule"/>
</dbReference>
<dbReference type="GO" id="GO:0006094">
    <property type="term" value="P:gluconeogenesis"/>
    <property type="evidence" value="ECO:0007669"/>
    <property type="project" value="UniProtKB-UniRule"/>
</dbReference>
<dbReference type="GO" id="GO:0046166">
    <property type="term" value="P:glyceraldehyde-3-phosphate biosynthetic process"/>
    <property type="evidence" value="ECO:0007669"/>
    <property type="project" value="TreeGrafter"/>
</dbReference>
<dbReference type="GO" id="GO:0019563">
    <property type="term" value="P:glycerol catabolic process"/>
    <property type="evidence" value="ECO:0007669"/>
    <property type="project" value="TreeGrafter"/>
</dbReference>
<dbReference type="GO" id="GO:0006096">
    <property type="term" value="P:glycolytic process"/>
    <property type="evidence" value="ECO:0007669"/>
    <property type="project" value="UniProtKB-UniRule"/>
</dbReference>
<dbReference type="CDD" id="cd00311">
    <property type="entry name" value="TIM"/>
    <property type="match status" value="1"/>
</dbReference>
<dbReference type="FunFam" id="3.20.20.70:FF:000016">
    <property type="entry name" value="Triosephosphate isomerase"/>
    <property type="match status" value="1"/>
</dbReference>
<dbReference type="Gene3D" id="3.20.20.70">
    <property type="entry name" value="Aldolase class I"/>
    <property type="match status" value="1"/>
</dbReference>
<dbReference type="HAMAP" id="MF_00147_B">
    <property type="entry name" value="TIM_B"/>
    <property type="match status" value="1"/>
</dbReference>
<dbReference type="InterPro" id="IPR013785">
    <property type="entry name" value="Aldolase_TIM"/>
</dbReference>
<dbReference type="InterPro" id="IPR035990">
    <property type="entry name" value="TIM_sf"/>
</dbReference>
<dbReference type="InterPro" id="IPR022896">
    <property type="entry name" value="TrioseP_Isoase_bac/euk"/>
</dbReference>
<dbReference type="InterPro" id="IPR000652">
    <property type="entry name" value="Triosephosphate_isomerase"/>
</dbReference>
<dbReference type="InterPro" id="IPR020861">
    <property type="entry name" value="Triosephosphate_isomerase_AS"/>
</dbReference>
<dbReference type="NCBIfam" id="TIGR00419">
    <property type="entry name" value="tim"/>
    <property type="match status" value="1"/>
</dbReference>
<dbReference type="PANTHER" id="PTHR21139">
    <property type="entry name" value="TRIOSEPHOSPHATE ISOMERASE"/>
    <property type="match status" value="1"/>
</dbReference>
<dbReference type="PANTHER" id="PTHR21139:SF42">
    <property type="entry name" value="TRIOSEPHOSPHATE ISOMERASE"/>
    <property type="match status" value="1"/>
</dbReference>
<dbReference type="Pfam" id="PF00121">
    <property type="entry name" value="TIM"/>
    <property type="match status" value="1"/>
</dbReference>
<dbReference type="SUPFAM" id="SSF51351">
    <property type="entry name" value="Triosephosphate isomerase (TIM)"/>
    <property type="match status" value="1"/>
</dbReference>
<dbReference type="PROSITE" id="PS00171">
    <property type="entry name" value="TIM_1"/>
    <property type="match status" value="1"/>
</dbReference>
<dbReference type="PROSITE" id="PS51440">
    <property type="entry name" value="TIM_2"/>
    <property type="match status" value="1"/>
</dbReference>